<gene>
    <name evidence="2" type="primary">eryH</name>
    <name type="ordered locus">BMEII0425</name>
</gene>
<dbReference type="EC" id="5.3.1.33" evidence="2"/>
<dbReference type="EMBL" id="AE008918">
    <property type="protein sequence ID" value="AAL53667.1"/>
    <property type="molecule type" value="Genomic_DNA"/>
</dbReference>
<dbReference type="PIR" id="AH3562">
    <property type="entry name" value="AH3562"/>
</dbReference>
<dbReference type="RefSeq" id="WP_004682245.1">
    <property type="nucleotide sequence ID" value="NC_003318.1"/>
</dbReference>
<dbReference type="SMR" id="Q8YCV3"/>
<dbReference type="GeneID" id="29595239"/>
<dbReference type="KEGG" id="bme:BMEII0425"/>
<dbReference type="KEGG" id="bmel:DK63_2814"/>
<dbReference type="PATRIC" id="fig|224914.52.peg.2950"/>
<dbReference type="eggNOG" id="COG0149">
    <property type="taxonomic scope" value="Bacteria"/>
</dbReference>
<dbReference type="UniPathway" id="UPA01066"/>
<dbReference type="Proteomes" id="UP000000419">
    <property type="component" value="Chromosome II"/>
</dbReference>
<dbReference type="GO" id="GO:0005829">
    <property type="term" value="C:cytosol"/>
    <property type="evidence" value="ECO:0007669"/>
    <property type="project" value="TreeGrafter"/>
</dbReference>
<dbReference type="GO" id="GO:0004807">
    <property type="term" value="F:triose-phosphate isomerase activity"/>
    <property type="evidence" value="ECO:0007669"/>
    <property type="project" value="InterPro"/>
</dbReference>
<dbReference type="GO" id="GO:0006094">
    <property type="term" value="P:gluconeogenesis"/>
    <property type="evidence" value="ECO:0007669"/>
    <property type="project" value="UniProtKB-KW"/>
</dbReference>
<dbReference type="GO" id="GO:0046166">
    <property type="term" value="P:glyceraldehyde-3-phosphate biosynthetic process"/>
    <property type="evidence" value="ECO:0007669"/>
    <property type="project" value="TreeGrafter"/>
</dbReference>
<dbReference type="GO" id="GO:0019563">
    <property type="term" value="P:glycerol catabolic process"/>
    <property type="evidence" value="ECO:0007669"/>
    <property type="project" value="TreeGrafter"/>
</dbReference>
<dbReference type="GO" id="GO:0006096">
    <property type="term" value="P:glycolytic process"/>
    <property type="evidence" value="ECO:0007669"/>
    <property type="project" value="UniProtKB-KW"/>
</dbReference>
<dbReference type="GO" id="GO:0006098">
    <property type="term" value="P:pentose-phosphate shunt"/>
    <property type="evidence" value="ECO:0007669"/>
    <property type="project" value="UniProtKB-KW"/>
</dbReference>
<dbReference type="CDD" id="cd00311">
    <property type="entry name" value="TIM"/>
    <property type="match status" value="1"/>
</dbReference>
<dbReference type="Gene3D" id="3.20.20.70">
    <property type="entry name" value="Aldolase class I"/>
    <property type="match status" value="1"/>
</dbReference>
<dbReference type="InterPro" id="IPR013785">
    <property type="entry name" value="Aldolase_TIM"/>
</dbReference>
<dbReference type="InterPro" id="IPR035990">
    <property type="entry name" value="TIM_sf"/>
</dbReference>
<dbReference type="InterPro" id="IPR000652">
    <property type="entry name" value="Triosephosphate_isomerase"/>
</dbReference>
<dbReference type="InterPro" id="IPR020861">
    <property type="entry name" value="Triosephosphate_isomerase_AS"/>
</dbReference>
<dbReference type="NCBIfam" id="NF000722">
    <property type="entry name" value="PRK00042.2-1"/>
    <property type="match status" value="1"/>
</dbReference>
<dbReference type="PANTHER" id="PTHR21139">
    <property type="entry name" value="TRIOSEPHOSPHATE ISOMERASE"/>
    <property type="match status" value="1"/>
</dbReference>
<dbReference type="PANTHER" id="PTHR21139:SF42">
    <property type="entry name" value="TRIOSEPHOSPHATE ISOMERASE"/>
    <property type="match status" value="1"/>
</dbReference>
<dbReference type="Pfam" id="PF00121">
    <property type="entry name" value="TIM"/>
    <property type="match status" value="1"/>
</dbReference>
<dbReference type="SUPFAM" id="SSF51351">
    <property type="entry name" value="Triosephosphate isomerase (TIM)"/>
    <property type="match status" value="1"/>
</dbReference>
<dbReference type="PROSITE" id="PS00171">
    <property type="entry name" value="TIM_1"/>
    <property type="match status" value="1"/>
</dbReference>
<dbReference type="PROSITE" id="PS51440">
    <property type="entry name" value="TIM_2"/>
    <property type="match status" value="1"/>
</dbReference>
<proteinExistence type="inferred from homology"/>
<comment type="function">
    <text evidence="2">Catalyzes the isomerization of D-erythrulose-4P to L-erythrulose-1P.</text>
</comment>
<comment type="catalytic activity">
    <reaction evidence="2">
        <text>L-erythrulose 1-phosphate = D-erythrulose 4-phosphate</text>
        <dbReference type="Rhea" id="RHEA:49588"/>
        <dbReference type="ChEBI" id="CHEBI:58002"/>
        <dbReference type="ChEBI" id="CHEBI:90796"/>
        <dbReference type="EC" id="5.3.1.33"/>
    </reaction>
</comment>
<comment type="pathway">
    <text evidence="2">Carbohydrate metabolism; erythritol degradation.</text>
</comment>
<comment type="subunit">
    <text evidence="1">Homodimer.</text>
</comment>
<comment type="subcellular location">
    <subcellularLocation>
        <location evidence="1">Cytoplasm</location>
    </subcellularLocation>
</comment>
<comment type="similarity">
    <text evidence="3">Belongs to the triosephosphate isomerase family.</text>
</comment>
<accession>Q8YCV3</accession>
<feature type="chain" id="PRO_0000090192" description="L-erythrulose-1-phosphate isomerase">
    <location>
        <begin position="1"/>
        <end position="256"/>
    </location>
</feature>
<feature type="active site" description="Electrophile" evidence="1">
    <location>
        <position position="96"/>
    </location>
</feature>
<feature type="active site" description="Proton acceptor" evidence="1">
    <location>
        <position position="169"/>
    </location>
</feature>
<feature type="binding site" evidence="1">
    <location>
        <position position="175"/>
    </location>
    <ligand>
        <name>substrate</name>
    </ligand>
</feature>
<feature type="binding site" evidence="1">
    <location>
        <position position="212"/>
    </location>
    <ligand>
        <name>substrate</name>
    </ligand>
</feature>
<reference key="1">
    <citation type="journal article" date="2002" name="Proc. Natl. Acad. Sci. U.S.A.">
        <title>The genome sequence of the facultative intracellular pathogen Brucella melitensis.</title>
        <authorList>
            <person name="DelVecchio V.G."/>
            <person name="Kapatral V."/>
            <person name="Redkar R.J."/>
            <person name="Patra G."/>
            <person name="Mujer C."/>
            <person name="Los T."/>
            <person name="Ivanova N."/>
            <person name="Anderson I."/>
            <person name="Bhattacharyya A."/>
            <person name="Lykidis A."/>
            <person name="Reznik G."/>
            <person name="Jablonski L."/>
            <person name="Larsen N."/>
            <person name="D'Souza M."/>
            <person name="Bernal A."/>
            <person name="Mazur M."/>
            <person name="Goltsman E."/>
            <person name="Selkov E."/>
            <person name="Elzer P.H."/>
            <person name="Hagius S."/>
            <person name="O'Callaghan D."/>
            <person name="Letesson J.-J."/>
            <person name="Haselkorn R."/>
            <person name="Kyrpides N.C."/>
            <person name="Overbeek R."/>
        </authorList>
    </citation>
    <scope>NUCLEOTIDE SEQUENCE [LARGE SCALE GENOMIC DNA]</scope>
    <source>
        <strain>ATCC 23456 / CCUG 17765 / NCTC 10094 / 16M</strain>
    </source>
</reference>
<organism>
    <name type="scientific">Brucella melitensis biotype 1 (strain ATCC 23456 / CCUG 17765 / NCTC 10094 / 16M)</name>
    <dbReference type="NCBI Taxonomy" id="224914"/>
    <lineage>
        <taxon>Bacteria</taxon>
        <taxon>Pseudomonadati</taxon>
        <taxon>Pseudomonadota</taxon>
        <taxon>Alphaproteobacteria</taxon>
        <taxon>Hyphomicrobiales</taxon>
        <taxon>Brucellaceae</taxon>
        <taxon>Brucella/Ochrobactrum group</taxon>
        <taxon>Brucella</taxon>
    </lineage>
</organism>
<keyword id="KW-0963">Cytoplasm</keyword>
<keyword id="KW-0312">Gluconeogenesis</keyword>
<keyword id="KW-0324">Glycolysis</keyword>
<keyword id="KW-0413">Isomerase</keyword>
<keyword id="KW-0570">Pentose shunt</keyword>
<protein>
    <recommendedName>
        <fullName evidence="2">L-erythrulose-1-phosphate isomerase</fullName>
        <ecNumber evidence="2">5.3.1.33</ecNumber>
    </recommendedName>
    <alternativeName>
        <fullName evidence="2">D-3-tetrulose-4-phosphate isomerase</fullName>
    </alternativeName>
</protein>
<evidence type="ECO:0000250" key="1">
    <source>
        <dbReference type="UniProtKB" id="P9WG43"/>
    </source>
</evidence>
<evidence type="ECO:0000250" key="2">
    <source>
        <dbReference type="UniProtKB" id="Q2YIQ6"/>
    </source>
</evidence>
<evidence type="ECO:0000305" key="3"/>
<name>ERYH_BRUME</name>
<sequence>MTKFWIGTSWKMNKTLAEARLFAEALKAADAGRSPDIQRFVIPPFTAVREVKEILSGTSVKVGAQNMHWADQGTWTGEISPLMLKDCNLDIVELGHSERREHFGETNETVGLKVEAAVRHGLIPLICIGETLEDCESGRAAAVLEEEVRGALSKLSEAQKQAEILFAYEPVWAIGENGIPASADYADARQAEIIAVAQSVLARRVPCLYGGSVNPGNCEELIACPHIDGLFIGRSAWNVEGYLDILARCATKVQAN</sequence>